<sequence>MTEEATTTLSSADIIEIMKLLPHRYPFLMVDKIIEIDGDNSAIGIKNVTVNEPHFTGHFPEAPIMPGVLLIEGMAQTAGAICAKKEGQPGNLVYFMTIENARFRKPVVPGDRVEFHVAKHKQRGNIWKFHCDAKVDGAVVAEADIGAMIVRKEQA</sequence>
<gene>
    <name evidence="1" type="primary">fabZ</name>
    <name type="ordered locus">Rleg2_1592</name>
</gene>
<comment type="function">
    <text evidence="1">Involved in unsaturated fatty acids biosynthesis. Catalyzes the dehydration of short chain beta-hydroxyacyl-ACPs and long chain saturated and unsaturated beta-hydroxyacyl-ACPs.</text>
</comment>
<comment type="catalytic activity">
    <reaction evidence="1">
        <text>a (3R)-hydroxyacyl-[ACP] = a (2E)-enoyl-[ACP] + H2O</text>
        <dbReference type="Rhea" id="RHEA:13097"/>
        <dbReference type="Rhea" id="RHEA-COMP:9925"/>
        <dbReference type="Rhea" id="RHEA-COMP:9945"/>
        <dbReference type="ChEBI" id="CHEBI:15377"/>
        <dbReference type="ChEBI" id="CHEBI:78784"/>
        <dbReference type="ChEBI" id="CHEBI:78827"/>
        <dbReference type="EC" id="4.2.1.59"/>
    </reaction>
</comment>
<comment type="subcellular location">
    <subcellularLocation>
        <location evidence="1">Cytoplasm</location>
    </subcellularLocation>
</comment>
<comment type="similarity">
    <text evidence="1">Belongs to the thioester dehydratase family. FabZ subfamily.</text>
</comment>
<feature type="chain" id="PRO_1000123656" description="3-hydroxyacyl-[acyl-carrier-protein] dehydratase FabZ">
    <location>
        <begin position="1"/>
        <end position="155"/>
    </location>
</feature>
<feature type="active site" evidence="1">
    <location>
        <position position="58"/>
    </location>
</feature>
<proteinExistence type="inferred from homology"/>
<organism>
    <name type="scientific">Rhizobium leguminosarum bv. trifolii (strain WSM2304)</name>
    <dbReference type="NCBI Taxonomy" id="395492"/>
    <lineage>
        <taxon>Bacteria</taxon>
        <taxon>Pseudomonadati</taxon>
        <taxon>Pseudomonadota</taxon>
        <taxon>Alphaproteobacteria</taxon>
        <taxon>Hyphomicrobiales</taxon>
        <taxon>Rhizobiaceae</taxon>
        <taxon>Rhizobium/Agrobacterium group</taxon>
        <taxon>Rhizobium</taxon>
    </lineage>
</organism>
<evidence type="ECO:0000255" key="1">
    <source>
        <dbReference type="HAMAP-Rule" id="MF_00406"/>
    </source>
</evidence>
<dbReference type="EC" id="4.2.1.59" evidence="1"/>
<dbReference type="EMBL" id="CP001191">
    <property type="protein sequence ID" value="ACI54882.1"/>
    <property type="molecule type" value="Genomic_DNA"/>
</dbReference>
<dbReference type="RefSeq" id="WP_012557553.1">
    <property type="nucleotide sequence ID" value="NC_011369.1"/>
</dbReference>
<dbReference type="SMR" id="B5ZN92"/>
<dbReference type="STRING" id="395492.Rleg2_1592"/>
<dbReference type="KEGG" id="rlt:Rleg2_1592"/>
<dbReference type="eggNOG" id="COG0764">
    <property type="taxonomic scope" value="Bacteria"/>
</dbReference>
<dbReference type="HOGENOM" id="CLU_078912_1_2_5"/>
<dbReference type="Proteomes" id="UP000008330">
    <property type="component" value="Chromosome"/>
</dbReference>
<dbReference type="GO" id="GO:0005737">
    <property type="term" value="C:cytoplasm"/>
    <property type="evidence" value="ECO:0007669"/>
    <property type="project" value="UniProtKB-SubCell"/>
</dbReference>
<dbReference type="GO" id="GO:0016020">
    <property type="term" value="C:membrane"/>
    <property type="evidence" value="ECO:0007669"/>
    <property type="project" value="GOC"/>
</dbReference>
<dbReference type="GO" id="GO:0019171">
    <property type="term" value="F:(3R)-hydroxyacyl-[acyl-carrier-protein] dehydratase activity"/>
    <property type="evidence" value="ECO:0007669"/>
    <property type="project" value="UniProtKB-EC"/>
</dbReference>
<dbReference type="GO" id="GO:0006633">
    <property type="term" value="P:fatty acid biosynthetic process"/>
    <property type="evidence" value="ECO:0007669"/>
    <property type="project" value="UniProtKB-UniRule"/>
</dbReference>
<dbReference type="GO" id="GO:0009245">
    <property type="term" value="P:lipid A biosynthetic process"/>
    <property type="evidence" value="ECO:0007669"/>
    <property type="project" value="UniProtKB-UniRule"/>
</dbReference>
<dbReference type="CDD" id="cd01288">
    <property type="entry name" value="FabZ"/>
    <property type="match status" value="1"/>
</dbReference>
<dbReference type="FunFam" id="3.10.129.10:FF:000001">
    <property type="entry name" value="3-hydroxyacyl-[acyl-carrier-protein] dehydratase FabZ"/>
    <property type="match status" value="1"/>
</dbReference>
<dbReference type="Gene3D" id="3.10.129.10">
    <property type="entry name" value="Hotdog Thioesterase"/>
    <property type="match status" value="1"/>
</dbReference>
<dbReference type="HAMAP" id="MF_00406">
    <property type="entry name" value="FabZ"/>
    <property type="match status" value="1"/>
</dbReference>
<dbReference type="InterPro" id="IPR013114">
    <property type="entry name" value="FabA_FabZ"/>
</dbReference>
<dbReference type="InterPro" id="IPR010084">
    <property type="entry name" value="FabZ"/>
</dbReference>
<dbReference type="InterPro" id="IPR029069">
    <property type="entry name" value="HotDog_dom_sf"/>
</dbReference>
<dbReference type="NCBIfam" id="TIGR01750">
    <property type="entry name" value="fabZ"/>
    <property type="match status" value="1"/>
</dbReference>
<dbReference type="NCBIfam" id="NF000582">
    <property type="entry name" value="PRK00006.1"/>
    <property type="match status" value="1"/>
</dbReference>
<dbReference type="PANTHER" id="PTHR30272">
    <property type="entry name" value="3-HYDROXYACYL-[ACYL-CARRIER-PROTEIN] DEHYDRATASE"/>
    <property type="match status" value="1"/>
</dbReference>
<dbReference type="PANTHER" id="PTHR30272:SF1">
    <property type="entry name" value="3-HYDROXYACYL-[ACYL-CARRIER-PROTEIN] DEHYDRATASE"/>
    <property type="match status" value="1"/>
</dbReference>
<dbReference type="Pfam" id="PF07977">
    <property type="entry name" value="FabA"/>
    <property type="match status" value="1"/>
</dbReference>
<dbReference type="SUPFAM" id="SSF54637">
    <property type="entry name" value="Thioesterase/thiol ester dehydrase-isomerase"/>
    <property type="match status" value="1"/>
</dbReference>
<protein>
    <recommendedName>
        <fullName evidence="1">3-hydroxyacyl-[acyl-carrier-protein] dehydratase FabZ</fullName>
        <ecNumber evidence="1">4.2.1.59</ecNumber>
    </recommendedName>
    <alternativeName>
        <fullName evidence="1">(3R)-hydroxymyristoyl-[acyl-carrier-protein] dehydratase</fullName>
        <shortName evidence="1">(3R)-hydroxymyristoyl-ACP dehydrase</shortName>
    </alternativeName>
    <alternativeName>
        <fullName evidence="1">Beta-hydroxyacyl-ACP dehydratase</fullName>
    </alternativeName>
</protein>
<accession>B5ZN92</accession>
<reference key="1">
    <citation type="journal article" date="2010" name="Stand. Genomic Sci.">
        <title>Complete genome sequence of Rhizobium leguminosarum bv trifolii strain WSM2304, an effective microsymbiont of the South American clover Trifolium polymorphum.</title>
        <authorList>
            <person name="Reeve W."/>
            <person name="O'Hara G."/>
            <person name="Chain P."/>
            <person name="Ardley J."/>
            <person name="Brau L."/>
            <person name="Nandesena K."/>
            <person name="Tiwari R."/>
            <person name="Malfatti S."/>
            <person name="Kiss H."/>
            <person name="Lapidus A."/>
            <person name="Copeland A."/>
            <person name="Nolan M."/>
            <person name="Land M."/>
            <person name="Ivanova N."/>
            <person name="Mavromatis K."/>
            <person name="Markowitz V."/>
            <person name="Kyrpides N."/>
            <person name="Melino V."/>
            <person name="Denton M."/>
            <person name="Yates R."/>
            <person name="Howieson J."/>
        </authorList>
    </citation>
    <scope>NUCLEOTIDE SEQUENCE [LARGE SCALE GENOMIC DNA]</scope>
    <source>
        <strain>WSM2304</strain>
    </source>
</reference>
<name>FABZ_RHILW</name>
<keyword id="KW-0963">Cytoplasm</keyword>
<keyword id="KW-0441">Lipid A biosynthesis</keyword>
<keyword id="KW-0444">Lipid biosynthesis</keyword>
<keyword id="KW-0443">Lipid metabolism</keyword>
<keyword id="KW-0456">Lyase</keyword>
<keyword id="KW-1185">Reference proteome</keyword>